<keyword id="KW-0966">Cell projection</keyword>
<keyword id="KW-0175">Coiled coil</keyword>
<keyword id="KW-0963">Cytoplasm</keyword>
<keyword id="KW-0206">Cytoskeleton</keyword>
<keyword id="KW-0903">Direct protein sequencing</keyword>
<keyword id="KW-0403">Intermediate filament</keyword>
<keyword id="KW-0597">Phosphoprotein</keyword>
<keyword id="KW-1185">Reference proteome</keyword>
<keyword id="KW-0677">Repeat</keyword>
<evidence type="ECO:0000250" key="1"/>
<evidence type="ECO:0000250" key="2">
    <source>
        <dbReference type="UniProtKB" id="P16884"/>
    </source>
</evidence>
<evidence type="ECO:0000255" key="3">
    <source>
        <dbReference type="PROSITE-ProRule" id="PRU01188"/>
    </source>
</evidence>
<evidence type="ECO:0000256" key="4">
    <source>
        <dbReference type="SAM" id="MobiDB-lite"/>
    </source>
</evidence>
<evidence type="ECO:0000269" key="5">
    <source>
    </source>
</evidence>
<evidence type="ECO:0000305" key="6"/>
<evidence type="ECO:0007744" key="7">
    <source>
    </source>
</evidence>
<evidence type="ECO:0007744" key="8">
    <source>
    </source>
</evidence>
<comment type="function">
    <text evidence="5">Neurofilaments usually contain three intermediate filament proteins: NEFL, NEFM, and NEFH which are involved in the maintenance of neuronal caliber. NEFH has an important function in mature axons that is not subserved by the two smaller NF proteins. May additionally cooperate with the neuronal intermediate filament proteins PRPH and INA to form neuronal filamentous networks (PubMed:22723690).</text>
</comment>
<comment type="subunit">
    <text evidence="2">Forms heterodimers with NEFL; which can further hetero-oligomerize (in vitro) (By similarity). Forms heterodimers with INA (in vitro) (By similarity).</text>
</comment>
<comment type="subcellular location">
    <subcellularLocation>
        <location evidence="5">Cytoplasm</location>
        <location evidence="5">Cytoskeleton</location>
    </subcellularLocation>
    <subcellularLocation>
        <location evidence="5">Cell projection</location>
        <location evidence="5">Axon</location>
    </subcellularLocation>
</comment>
<comment type="tissue specificity">
    <text evidence="5">Expressed in the sciatic nerve (at protein level).</text>
</comment>
<comment type="PTM">
    <text>There are a number of repeats of the tripeptide K-S-P, NFH is phosphorylated on a number of the serines in this motif. It is thought that phosphorylation of NFH results in the formation of interfilament cross bridges that are important in the maintenance of axonal caliber.</text>
</comment>
<comment type="PTM">
    <text>Phosphorylation seems to play a major role in the functioning of the larger neurofilament polypeptides (NF-M and NF-H), the levels of phosphorylation being altered developmentally and coincidentally with a change in the neurofilament function.</text>
</comment>
<comment type="PTM">
    <text evidence="1">Phosphorylated in the head and rod regions by the PKC kinase PKN1, leading to the inhibition of polymerization.</text>
</comment>
<comment type="similarity">
    <text evidence="3">Belongs to the intermediate filament family.</text>
</comment>
<comment type="sequence caution" evidence="6">
    <conflict type="erroneous initiation">
        <sequence resource="EMBL-CDS" id="AAA39813"/>
    </conflict>
    <text>Truncated N-terminus.</text>
</comment>
<comment type="sequence caution" evidence="6">
    <conflict type="erroneous initiation">
        <sequence resource="EMBL-CDS" id="CAA83229"/>
    </conflict>
    <text>Truncated N-terminus.</text>
</comment>
<organism>
    <name type="scientific">Mus musculus</name>
    <name type="common">Mouse</name>
    <dbReference type="NCBI Taxonomy" id="10090"/>
    <lineage>
        <taxon>Eukaryota</taxon>
        <taxon>Metazoa</taxon>
        <taxon>Chordata</taxon>
        <taxon>Craniata</taxon>
        <taxon>Vertebrata</taxon>
        <taxon>Euteleostomi</taxon>
        <taxon>Mammalia</taxon>
        <taxon>Eutheria</taxon>
        <taxon>Euarchontoglires</taxon>
        <taxon>Glires</taxon>
        <taxon>Rodentia</taxon>
        <taxon>Myomorpha</taxon>
        <taxon>Muroidea</taxon>
        <taxon>Muridae</taxon>
        <taxon>Murinae</taxon>
        <taxon>Mus</taxon>
        <taxon>Mus</taxon>
    </lineage>
</organism>
<dbReference type="EMBL" id="M35131">
    <property type="protein sequence ID" value="AAA39809.1"/>
    <property type="molecule type" value="mRNA"/>
</dbReference>
<dbReference type="EMBL" id="M24496">
    <property type="protein sequence ID" value="AAA39813.1"/>
    <property type="status" value="ALT_INIT"/>
    <property type="molecule type" value="Genomic_DNA"/>
</dbReference>
<dbReference type="EMBL" id="M23349">
    <property type="protein sequence ID" value="AAA39813.1"/>
    <property type="status" value="JOINED"/>
    <property type="molecule type" value="Genomic_DNA"/>
</dbReference>
<dbReference type="EMBL" id="M24494">
    <property type="protein sequence ID" value="AAA39813.1"/>
    <property type="status" value="JOINED"/>
    <property type="molecule type" value="Genomic_DNA"/>
</dbReference>
<dbReference type="EMBL" id="M24495">
    <property type="protein sequence ID" value="AAA39813.1"/>
    <property type="status" value="JOINED"/>
    <property type="molecule type" value="Genomic_DNA"/>
</dbReference>
<dbReference type="EMBL" id="Z31012">
    <property type="protein sequence ID" value="CAA83229.1"/>
    <property type="status" value="ALT_INIT"/>
    <property type="molecule type" value="Genomic_DNA"/>
</dbReference>
<dbReference type="EMBL" id="AL645522">
    <property type="status" value="NOT_ANNOTATED_CDS"/>
    <property type="molecule type" value="Genomic_DNA"/>
</dbReference>
<dbReference type="EMBL" id="EF101556">
    <property type="protein sequence ID" value="ABK96805.1"/>
    <property type="molecule type" value="mRNA"/>
</dbReference>
<dbReference type="CCDS" id="CCDS36099.1"/>
<dbReference type="PIR" id="JT0368">
    <property type="entry name" value="QFMSH"/>
</dbReference>
<dbReference type="RefSeq" id="NP_035034.2">
    <property type="nucleotide sequence ID" value="NM_010904.3"/>
</dbReference>
<dbReference type="SMR" id="P19246"/>
<dbReference type="BioGRID" id="237594">
    <property type="interactions" value="18"/>
</dbReference>
<dbReference type="FunCoup" id="P19246">
    <property type="interactions" value="91"/>
</dbReference>
<dbReference type="IntAct" id="P19246">
    <property type="interactions" value="5"/>
</dbReference>
<dbReference type="MINT" id="P19246"/>
<dbReference type="STRING" id="10090.ENSMUSP00000091061"/>
<dbReference type="GlyGen" id="P19246">
    <property type="glycosylation" value="5 sites, 1 O-linked glycan (5 sites)"/>
</dbReference>
<dbReference type="iPTMnet" id="P19246"/>
<dbReference type="PhosphoSitePlus" id="P19246"/>
<dbReference type="SwissPalm" id="P19246"/>
<dbReference type="jPOST" id="P19246"/>
<dbReference type="PaxDb" id="10090-ENSMUSP00000091061"/>
<dbReference type="PeptideAtlas" id="P19246"/>
<dbReference type="ProteomicsDB" id="287406"/>
<dbReference type="Antibodypedia" id="3579">
    <property type="antibodies" value="1738 antibodies from 47 providers"/>
</dbReference>
<dbReference type="DNASU" id="380684"/>
<dbReference type="Ensembl" id="ENSMUST00000093369.5">
    <property type="protein sequence ID" value="ENSMUSP00000091061.5"/>
    <property type="gene ID" value="ENSMUSG00000020396.9"/>
</dbReference>
<dbReference type="GeneID" id="380684"/>
<dbReference type="KEGG" id="mmu:380684"/>
<dbReference type="UCSC" id="uc007hvm.1">
    <property type="organism name" value="mouse"/>
</dbReference>
<dbReference type="AGR" id="MGI:97309"/>
<dbReference type="CTD" id="4744"/>
<dbReference type="MGI" id="MGI:97309">
    <property type="gene designation" value="Nefh"/>
</dbReference>
<dbReference type="VEuPathDB" id="HostDB:ENSMUSG00000020396"/>
<dbReference type="eggNOG" id="ENOG502QYDU">
    <property type="taxonomic scope" value="Eukaryota"/>
</dbReference>
<dbReference type="GeneTree" id="ENSGT00940000161893"/>
<dbReference type="HOGENOM" id="CLU_012560_7_2_1"/>
<dbReference type="InParanoid" id="P19246"/>
<dbReference type="OMA" id="FHSWTRT"/>
<dbReference type="OrthoDB" id="2441647at2759"/>
<dbReference type="PhylomeDB" id="P19246"/>
<dbReference type="TreeFam" id="TF330122"/>
<dbReference type="BioGRID-ORCS" id="380684">
    <property type="hits" value="3 hits in 76 CRISPR screens"/>
</dbReference>
<dbReference type="CD-CODE" id="CE726F99">
    <property type="entry name" value="Postsynaptic density"/>
</dbReference>
<dbReference type="PRO" id="PR:P19246"/>
<dbReference type="Proteomes" id="UP000000589">
    <property type="component" value="Chromosome 11"/>
</dbReference>
<dbReference type="RNAct" id="P19246">
    <property type="molecule type" value="protein"/>
</dbReference>
<dbReference type="Bgee" id="ENSMUSG00000020396">
    <property type="expression patterns" value="Expressed in ventral horn of spinal cord and 135 other cell types or tissues"/>
</dbReference>
<dbReference type="GO" id="GO:0030424">
    <property type="term" value="C:axon"/>
    <property type="evidence" value="ECO:0000314"/>
    <property type="project" value="UniProtKB"/>
</dbReference>
<dbReference type="GO" id="GO:0005739">
    <property type="term" value="C:mitochondrion"/>
    <property type="evidence" value="ECO:0007005"/>
    <property type="project" value="MGI"/>
</dbReference>
<dbReference type="GO" id="GO:0043209">
    <property type="term" value="C:myelin sheath"/>
    <property type="evidence" value="ECO:0007005"/>
    <property type="project" value="UniProtKB"/>
</dbReference>
<dbReference type="GO" id="GO:0097418">
    <property type="term" value="C:neurofibrillary tangle"/>
    <property type="evidence" value="ECO:0007669"/>
    <property type="project" value="Ensembl"/>
</dbReference>
<dbReference type="GO" id="GO:0005883">
    <property type="term" value="C:neurofilament"/>
    <property type="evidence" value="ECO:0000314"/>
    <property type="project" value="MGI"/>
</dbReference>
<dbReference type="GO" id="GO:0014069">
    <property type="term" value="C:postsynaptic density"/>
    <property type="evidence" value="ECO:0000314"/>
    <property type="project" value="MGI"/>
</dbReference>
<dbReference type="GO" id="GO:0099160">
    <property type="term" value="C:postsynaptic intermediate filament cytoskeleton"/>
    <property type="evidence" value="ECO:0000314"/>
    <property type="project" value="SynGO"/>
</dbReference>
<dbReference type="GO" id="GO:0098685">
    <property type="term" value="C:Schaffer collateral - CA1 synapse"/>
    <property type="evidence" value="ECO:0000314"/>
    <property type="project" value="SynGO"/>
</dbReference>
<dbReference type="GO" id="GO:0019901">
    <property type="term" value="F:protein kinase binding"/>
    <property type="evidence" value="ECO:0007669"/>
    <property type="project" value="Ensembl"/>
</dbReference>
<dbReference type="GO" id="GO:0099184">
    <property type="term" value="F:structural constituent of postsynaptic intermediate filament cytoskeleton"/>
    <property type="evidence" value="ECO:0000314"/>
    <property type="project" value="SynGO"/>
</dbReference>
<dbReference type="GO" id="GO:0061564">
    <property type="term" value="P:axon development"/>
    <property type="evidence" value="ECO:0000315"/>
    <property type="project" value="BHF-UCL"/>
</dbReference>
<dbReference type="GO" id="GO:1990830">
    <property type="term" value="P:cellular response to leukemia inhibitory factor"/>
    <property type="evidence" value="ECO:0000270"/>
    <property type="project" value="MGI"/>
</dbReference>
<dbReference type="GO" id="GO:0045110">
    <property type="term" value="P:intermediate filament bundle assembly"/>
    <property type="evidence" value="ECO:0000316"/>
    <property type="project" value="MGI"/>
</dbReference>
<dbReference type="GO" id="GO:0045104">
    <property type="term" value="P:intermediate filament cytoskeleton organization"/>
    <property type="evidence" value="ECO:0000315"/>
    <property type="project" value="MGI"/>
</dbReference>
<dbReference type="GO" id="GO:0000226">
    <property type="term" value="P:microtubule cytoskeleton organization"/>
    <property type="evidence" value="ECO:0000316"/>
    <property type="project" value="MGI"/>
</dbReference>
<dbReference type="GO" id="GO:0033693">
    <property type="term" value="P:neurofilament bundle assembly"/>
    <property type="evidence" value="ECO:0007669"/>
    <property type="project" value="Ensembl"/>
</dbReference>
<dbReference type="GO" id="GO:0060052">
    <property type="term" value="P:neurofilament cytoskeleton organization"/>
    <property type="evidence" value="ECO:0000315"/>
    <property type="project" value="MGI"/>
</dbReference>
<dbReference type="GO" id="GO:0048936">
    <property type="term" value="P:peripheral nervous system neuron axonogenesis"/>
    <property type="evidence" value="ECO:0000315"/>
    <property type="project" value="MGI"/>
</dbReference>
<dbReference type="GO" id="GO:0099170">
    <property type="term" value="P:postsynaptic modulation of chemical synaptic transmission"/>
    <property type="evidence" value="ECO:0000314"/>
    <property type="project" value="SynGO"/>
</dbReference>
<dbReference type="GO" id="GO:1902513">
    <property type="term" value="P:regulation of organelle transport along microtubule"/>
    <property type="evidence" value="ECO:0007669"/>
    <property type="project" value="Ensembl"/>
</dbReference>
<dbReference type="FunFam" id="1.20.5.1160:FF:000010">
    <property type="entry name" value="neurofilament heavy polypeptide"/>
    <property type="match status" value="1"/>
</dbReference>
<dbReference type="FunFam" id="1.20.5.170:FF:000002">
    <property type="entry name" value="Type I keratin KA11"/>
    <property type="match status" value="1"/>
</dbReference>
<dbReference type="Gene3D" id="1.20.5.170">
    <property type="match status" value="1"/>
</dbReference>
<dbReference type="Gene3D" id="1.20.5.500">
    <property type="entry name" value="Single helix bin"/>
    <property type="match status" value="1"/>
</dbReference>
<dbReference type="Gene3D" id="1.20.5.1160">
    <property type="entry name" value="Vasodilator-stimulated phosphoprotein"/>
    <property type="match status" value="1"/>
</dbReference>
<dbReference type="InterPro" id="IPR010790">
    <property type="entry name" value="DUF1388"/>
</dbReference>
<dbReference type="InterPro" id="IPR018039">
    <property type="entry name" value="IF_conserved"/>
</dbReference>
<dbReference type="InterPro" id="IPR039008">
    <property type="entry name" value="IF_rod_dom"/>
</dbReference>
<dbReference type="PANTHER" id="PTHR23214:SF1">
    <property type="entry name" value="NEUROFILAMENT HEAVY POLYPEPTIDE"/>
    <property type="match status" value="1"/>
</dbReference>
<dbReference type="PANTHER" id="PTHR23214">
    <property type="entry name" value="NEUROFILAMENT TRIPLET H PROTEIN"/>
    <property type="match status" value="1"/>
</dbReference>
<dbReference type="Pfam" id="PF07142">
    <property type="entry name" value="DUF1388"/>
    <property type="match status" value="20"/>
</dbReference>
<dbReference type="Pfam" id="PF00038">
    <property type="entry name" value="Filament"/>
    <property type="match status" value="1"/>
</dbReference>
<dbReference type="SMART" id="SM01391">
    <property type="entry name" value="Filament"/>
    <property type="match status" value="1"/>
</dbReference>
<dbReference type="SUPFAM" id="SSF64593">
    <property type="entry name" value="Intermediate filament protein, coiled coil region"/>
    <property type="match status" value="2"/>
</dbReference>
<dbReference type="PROSITE" id="PS00226">
    <property type="entry name" value="IF_ROD_1"/>
    <property type="match status" value="1"/>
</dbReference>
<dbReference type="PROSITE" id="PS51842">
    <property type="entry name" value="IF_ROD_2"/>
    <property type="match status" value="1"/>
</dbReference>
<feature type="chain" id="PRO_0000063801" description="Neurofilament heavy polypeptide">
    <location>
        <begin position="1"/>
        <end position="1090"/>
    </location>
</feature>
<feature type="domain" description="IF rod" evidence="3">
    <location>
        <begin position="95"/>
        <end position="411"/>
    </location>
</feature>
<feature type="repeat" description="1">
    <location>
        <begin position="522"/>
        <end position="527"/>
    </location>
</feature>
<feature type="repeat" description="2">
    <location>
        <begin position="528"/>
        <end position="533"/>
    </location>
</feature>
<feature type="repeat" description="3">
    <location>
        <begin position="534"/>
        <end position="539"/>
    </location>
</feature>
<feature type="repeat" description="4">
    <location>
        <begin position="540"/>
        <end position="545"/>
    </location>
</feature>
<feature type="repeat" description="5">
    <location>
        <begin position="546"/>
        <end position="551"/>
    </location>
</feature>
<feature type="repeat" description="6">
    <location>
        <begin position="552"/>
        <end position="557"/>
    </location>
</feature>
<feature type="repeat" description="7">
    <location>
        <begin position="558"/>
        <end position="563"/>
    </location>
</feature>
<feature type="repeat" description="8">
    <location>
        <begin position="564"/>
        <end position="569"/>
    </location>
</feature>
<feature type="repeat" description="9">
    <location>
        <begin position="570"/>
        <end position="575"/>
    </location>
</feature>
<feature type="repeat" description="10">
    <location>
        <begin position="576"/>
        <end position="581"/>
    </location>
</feature>
<feature type="repeat" description="11">
    <location>
        <begin position="582"/>
        <end position="587"/>
    </location>
</feature>
<feature type="repeat" description="12">
    <location>
        <begin position="588"/>
        <end position="593"/>
    </location>
</feature>
<feature type="repeat" description="13">
    <location>
        <begin position="594"/>
        <end position="599"/>
    </location>
</feature>
<feature type="repeat" description="14">
    <location>
        <begin position="600"/>
        <end position="605"/>
    </location>
</feature>
<feature type="repeat" description="15">
    <location>
        <begin position="606"/>
        <end position="611"/>
    </location>
</feature>
<feature type="repeat" description="16">
    <location>
        <begin position="612"/>
        <end position="617"/>
    </location>
</feature>
<feature type="repeat" description="17">
    <location>
        <begin position="618"/>
        <end position="623"/>
    </location>
</feature>
<feature type="repeat" description="18">
    <location>
        <begin position="624"/>
        <end position="629"/>
    </location>
</feature>
<feature type="repeat" description="19">
    <location>
        <begin position="630"/>
        <end position="635"/>
    </location>
</feature>
<feature type="repeat" description="20">
    <location>
        <begin position="636"/>
        <end position="641"/>
    </location>
</feature>
<feature type="repeat" description="21">
    <location>
        <begin position="642"/>
        <end position="647"/>
    </location>
</feature>
<feature type="repeat" description="22">
    <location>
        <begin position="648"/>
        <end position="653"/>
    </location>
</feature>
<feature type="repeat" description="23">
    <location>
        <begin position="654"/>
        <end position="659"/>
    </location>
</feature>
<feature type="repeat" description="24">
    <location>
        <begin position="660"/>
        <end position="665"/>
    </location>
</feature>
<feature type="repeat" description="25">
    <location>
        <begin position="666"/>
        <end position="671"/>
    </location>
</feature>
<feature type="repeat" description="26">
    <location>
        <begin position="672"/>
        <end position="677"/>
    </location>
</feature>
<feature type="repeat" description="27">
    <location>
        <begin position="678"/>
        <end position="683"/>
    </location>
</feature>
<feature type="repeat" description="28">
    <location>
        <begin position="684"/>
        <end position="689"/>
    </location>
</feature>
<feature type="repeat" description="29">
    <location>
        <begin position="690"/>
        <end position="695"/>
    </location>
</feature>
<feature type="repeat" description="30">
    <location>
        <begin position="696"/>
        <end position="701"/>
    </location>
</feature>
<feature type="repeat" description="31">
    <location>
        <begin position="702"/>
        <end position="707"/>
    </location>
</feature>
<feature type="repeat" description="32">
    <location>
        <begin position="708"/>
        <end position="713"/>
    </location>
</feature>
<feature type="repeat" description="33">
    <location>
        <begin position="714"/>
        <end position="719"/>
    </location>
</feature>
<feature type="repeat" description="34">
    <location>
        <begin position="720"/>
        <end position="725"/>
    </location>
</feature>
<feature type="repeat" description="35">
    <location>
        <begin position="726"/>
        <end position="731"/>
    </location>
</feature>
<feature type="repeat" description="36">
    <location>
        <begin position="732"/>
        <end position="737"/>
    </location>
</feature>
<feature type="repeat" description="37">
    <location>
        <begin position="738"/>
        <end position="743"/>
    </location>
</feature>
<feature type="repeat" description="38">
    <location>
        <begin position="744"/>
        <end position="749"/>
    </location>
</feature>
<feature type="repeat" description="39">
    <location>
        <begin position="750"/>
        <end position="755"/>
    </location>
</feature>
<feature type="repeat" description="40">
    <location>
        <begin position="756"/>
        <end position="761"/>
    </location>
</feature>
<feature type="repeat" description="41">
    <location>
        <begin position="762"/>
        <end position="767"/>
    </location>
</feature>
<feature type="repeat" description="42">
    <location>
        <begin position="768"/>
        <end position="773"/>
    </location>
</feature>
<feature type="repeat" description="43; approximate">
    <location>
        <begin position="774"/>
        <end position="779"/>
    </location>
</feature>
<feature type="repeat" description="44">
    <location>
        <begin position="782"/>
        <end position="787"/>
    </location>
</feature>
<feature type="repeat" description="45">
    <location>
        <begin position="788"/>
        <end position="793"/>
    </location>
</feature>
<feature type="repeat" description="46">
    <location>
        <begin position="794"/>
        <end position="799"/>
    </location>
</feature>
<feature type="repeat" description="47">
    <location>
        <begin position="808"/>
        <end position="813"/>
    </location>
</feature>
<feature type="repeat" description="48">
    <location>
        <begin position="814"/>
        <end position="819"/>
    </location>
</feature>
<feature type="repeat" description="49">
    <location>
        <begin position="833"/>
        <end position="838"/>
    </location>
</feature>
<feature type="repeat" description="50">
    <location>
        <begin position="858"/>
        <end position="863"/>
    </location>
</feature>
<feature type="repeat" description="51">
    <location>
        <begin position="866"/>
        <end position="871"/>
    </location>
</feature>
<feature type="repeat" description="52">
    <location>
        <begin position="887"/>
        <end position="892"/>
    </location>
</feature>
<feature type="region of interest" description="Head">
    <location>
        <begin position="2"/>
        <end position="98"/>
    </location>
</feature>
<feature type="region of interest" description="Coil 1A">
    <location>
        <begin position="99"/>
        <end position="130"/>
    </location>
</feature>
<feature type="region of interest" description="Linker 1">
    <location>
        <begin position="131"/>
        <end position="143"/>
    </location>
</feature>
<feature type="region of interest" description="Coil 1B">
    <location>
        <begin position="144"/>
        <end position="242"/>
    </location>
</feature>
<feature type="region of interest" description="Linker 12">
    <location>
        <begin position="243"/>
        <end position="264"/>
    </location>
</feature>
<feature type="region of interest" description="Coil 2A">
    <location>
        <begin position="265"/>
        <end position="286"/>
    </location>
</feature>
<feature type="region of interest" description="Linker 2">
    <location>
        <begin position="287"/>
        <end position="290"/>
    </location>
</feature>
<feature type="region of interest" description="Coil 2B">
    <location>
        <begin position="291"/>
        <end position="411"/>
    </location>
</feature>
<feature type="region of interest" description="Tail">
    <location>
        <begin position="412"/>
        <end position="1090"/>
    </location>
</feature>
<feature type="region of interest" description="Disordered" evidence="4">
    <location>
        <begin position="456"/>
        <end position="1090"/>
    </location>
</feature>
<feature type="region of interest" description="52 X 6 AA approximate tandem repeats of K-S-P-[AGISV]-[EATK]-[APVQ]">
    <location>
        <begin position="522"/>
        <end position="892"/>
    </location>
</feature>
<feature type="compositionally biased region" description="Acidic residues" evidence="4">
    <location>
        <begin position="468"/>
        <end position="495"/>
    </location>
</feature>
<feature type="compositionally biased region" description="Low complexity" evidence="4">
    <location>
        <begin position="496"/>
        <end position="506"/>
    </location>
</feature>
<feature type="compositionally biased region" description="Basic and acidic residues" evidence="4">
    <location>
        <begin position="508"/>
        <end position="579"/>
    </location>
</feature>
<feature type="compositionally biased region" description="Basic and acidic residues" evidence="4">
    <location>
        <begin position="595"/>
        <end position="633"/>
    </location>
</feature>
<feature type="compositionally biased region" description="Basic and acidic residues" evidence="4">
    <location>
        <begin position="649"/>
        <end position="717"/>
    </location>
</feature>
<feature type="compositionally biased region" description="Basic and acidic residues" evidence="4">
    <location>
        <begin position="745"/>
        <end position="781"/>
    </location>
</feature>
<feature type="compositionally biased region" description="Basic and acidic residues" evidence="4">
    <location>
        <begin position="788"/>
        <end position="834"/>
    </location>
</feature>
<feature type="compositionally biased region" description="Basic and acidic residues" evidence="4">
    <location>
        <begin position="843"/>
        <end position="964"/>
    </location>
</feature>
<feature type="compositionally biased region" description="Basic and acidic residues" evidence="4">
    <location>
        <begin position="974"/>
        <end position="1090"/>
    </location>
</feature>
<feature type="modified residue" description="Phosphoserine" evidence="8">
    <location>
        <position position="74"/>
    </location>
</feature>
<feature type="modified residue" description="Phosphoserine" evidence="8">
    <location>
        <position position="122"/>
    </location>
</feature>
<feature type="modified residue" description="Phosphoserine" evidence="2">
    <location>
        <position position="345"/>
    </location>
</feature>
<feature type="modified residue" description="Phosphoserine" evidence="7 8">
    <location>
        <position position="416"/>
    </location>
</feature>
<feature type="modified residue" description="Phosphoserine" evidence="8">
    <location>
        <position position="419"/>
    </location>
</feature>
<feature type="modified residue" description="Phosphoserine" evidence="2">
    <location>
        <position position="508"/>
    </location>
</feature>
<feature type="modified residue" description="Phosphoserine" evidence="2">
    <location>
        <position position="523"/>
    </location>
</feature>
<feature type="modified residue" description="Phosphoserine" evidence="7">
    <location>
        <position position="529"/>
    </location>
</feature>
<feature type="modified residue" description="Phosphoserine" evidence="7 8">
    <location>
        <position position="535"/>
    </location>
</feature>
<feature type="modified residue" description="Phosphoserine" evidence="8">
    <location>
        <position position="541"/>
    </location>
</feature>
<feature type="modified residue" description="Phosphoserine" evidence="7 8">
    <location>
        <position position="547"/>
    </location>
</feature>
<feature type="modified residue" description="Phosphoserine" evidence="8">
    <location>
        <position position="553"/>
    </location>
</feature>
<feature type="modified residue" description="Phosphoserine" evidence="7 8">
    <location>
        <position position="559"/>
    </location>
</feature>
<feature type="modified residue" description="Phosphoserine" evidence="7 8">
    <location>
        <position position="565"/>
    </location>
</feature>
<feature type="modified residue" description="Phosphoserine" evidence="7 8">
    <location>
        <position position="571"/>
    </location>
</feature>
<feature type="modified residue" description="Phosphoserine" evidence="7">
    <location>
        <position position="577"/>
    </location>
</feature>
<feature type="modified residue" description="Phosphoserine" evidence="8">
    <location>
        <position position="583"/>
    </location>
</feature>
<feature type="modified residue" description="Phosphoserine" evidence="7 8">
    <location>
        <position position="589"/>
    </location>
</feature>
<feature type="modified residue" description="Phosphoserine" evidence="8">
    <location>
        <position position="595"/>
    </location>
</feature>
<feature type="modified residue" description="Phosphoserine" evidence="7 8">
    <location>
        <position position="601"/>
    </location>
</feature>
<feature type="modified residue" description="Phosphoserine" evidence="7 8">
    <location>
        <position position="607"/>
    </location>
</feature>
<feature type="modified residue" description="Phosphoserine" evidence="7">
    <location>
        <position position="613"/>
    </location>
</feature>
<feature type="modified residue" description="Phosphoserine" evidence="7 8">
    <location>
        <position position="619"/>
    </location>
</feature>
<feature type="modified residue" description="Phosphoserine" evidence="7">
    <location>
        <position position="625"/>
    </location>
</feature>
<feature type="modified residue" description="Phosphoserine" evidence="7 8">
    <location>
        <position position="631"/>
    </location>
</feature>
<feature type="modified residue" description="Phosphoserine" evidence="7 8">
    <location>
        <position position="637"/>
    </location>
</feature>
<feature type="modified residue" description="Phosphoserine" evidence="8">
    <location>
        <position position="643"/>
    </location>
</feature>
<feature type="modified residue" description="Phosphoserine" evidence="8">
    <location>
        <position position="649"/>
    </location>
</feature>
<feature type="modified residue" description="Phosphoserine" evidence="7 8">
    <location>
        <position position="655"/>
    </location>
</feature>
<feature type="modified residue" description="Phosphoserine" evidence="7 8">
    <location>
        <position position="661"/>
    </location>
</feature>
<feature type="modified residue" description="Phosphoserine" evidence="7 8">
    <location>
        <position position="667"/>
    </location>
</feature>
<feature type="modified residue" description="Phosphoserine" evidence="7 8">
    <location>
        <position position="673"/>
    </location>
</feature>
<feature type="modified residue" description="Phosphoserine" evidence="7 8">
    <location>
        <position position="679"/>
    </location>
</feature>
<feature type="modified residue" description="Phosphoserine" evidence="7 8">
    <location>
        <position position="685"/>
    </location>
</feature>
<feature type="modified residue" description="Phosphoserine" evidence="8">
    <location>
        <position position="691"/>
    </location>
</feature>
<feature type="modified residue" description="Phosphoserine" evidence="7 8">
    <location>
        <position position="697"/>
    </location>
</feature>
<feature type="modified residue" description="Phosphoserine" evidence="7 8">
    <location>
        <position position="703"/>
    </location>
</feature>
<feature type="modified residue" description="Phosphoserine" evidence="7 8">
    <location>
        <position position="709"/>
    </location>
</feature>
<feature type="modified residue" description="Phosphoserine" evidence="7">
    <location>
        <position position="715"/>
    </location>
</feature>
<feature type="modified residue" description="Phosphoserine" evidence="2">
    <location>
        <position position="721"/>
    </location>
</feature>
<feature type="modified residue" description="Phosphoserine" evidence="7 8">
    <location>
        <position position="727"/>
    </location>
</feature>
<feature type="modified residue" description="Phosphoserine" evidence="7 8">
    <location>
        <position position="733"/>
    </location>
</feature>
<feature type="modified residue" description="Phosphoserine" evidence="7 8">
    <location>
        <position position="739"/>
    </location>
</feature>
<feature type="modified residue" description="Phosphoserine" evidence="7 8">
    <location>
        <position position="745"/>
    </location>
</feature>
<feature type="modified residue" description="Phosphoserine" evidence="7 8">
    <location>
        <position position="751"/>
    </location>
</feature>
<feature type="modified residue" description="Phosphoserine" evidence="7 8">
    <location>
        <position position="757"/>
    </location>
</feature>
<feature type="modified residue" description="Phosphoserine" evidence="7 8">
    <location>
        <position position="763"/>
    </location>
</feature>
<feature type="modified residue" description="Phosphoserine" evidence="7 8">
    <location>
        <position position="769"/>
    </location>
</feature>
<feature type="modified residue" description="Phosphoserine" evidence="7">
    <location>
        <position position="783"/>
    </location>
</feature>
<feature type="modified residue" description="Phosphoserine" evidence="7">
    <location>
        <position position="789"/>
    </location>
</feature>
<feature type="modified residue" description="Phosphoserine" evidence="8">
    <location>
        <position position="795"/>
    </location>
</feature>
<feature type="modified residue" description="Phosphoserine" evidence="2">
    <location>
        <position position="809"/>
    </location>
</feature>
<feature type="modified residue" description="Phosphoserine" evidence="7">
    <location>
        <position position="815"/>
    </location>
</feature>
<feature type="modified residue" description="Phosphoserine" evidence="7 8">
    <location>
        <position position="834"/>
    </location>
</feature>
<feature type="modified residue" description="Phosphothreonine" evidence="2">
    <location>
        <position position="839"/>
    </location>
</feature>
<feature type="modified residue" description="Phosphoserine" evidence="8">
    <location>
        <position position="859"/>
    </location>
</feature>
<feature type="modified residue" description="Phosphoserine" evidence="7">
    <location>
        <position position="867"/>
    </location>
</feature>
<feature type="modified residue" description="Phosphoserine" evidence="7">
    <location>
        <position position="888"/>
    </location>
</feature>
<feature type="modified residue" description="Phosphoserine" evidence="2">
    <location>
        <position position="947"/>
    </location>
</feature>
<feature type="sequence conflict" description="In Ref. 2; AAA39813." evidence="6" ref="2">
    <original>QA</original>
    <variation>K</variation>
    <location>
        <begin position="134"/>
        <end position="135"/>
    </location>
</feature>
<feature type="sequence conflict" description="In Ref. 2; AAA39813." evidence="6" ref="2">
    <location>
        <position position="202"/>
    </location>
</feature>
<feature type="sequence conflict" description="In Ref. 2; AAA39813." evidence="6" ref="2">
    <original>T</original>
    <variation>S</variation>
    <location>
        <position position="284"/>
    </location>
</feature>
<feature type="sequence conflict" description="In Ref. 2; AAA39813." evidence="6" ref="2">
    <original>G</original>
    <variation>L</variation>
    <location>
        <position position="495"/>
    </location>
</feature>
<feature type="sequence conflict" description="In Ref. 1; AAA39809 and 3; CAA83229." evidence="6" ref="1 3">
    <original>E</original>
    <variation>EEAKSPG</variation>
    <location>
        <position position="519"/>
    </location>
</feature>
<feature type="sequence conflict" description="In Ref. 1; AAA39809 and 3; CAA83229." evidence="6" ref="1 3">
    <original>G</original>
    <variation>R</variation>
    <location>
        <position position="549"/>
    </location>
</feature>
<feature type="sequence conflict" description="In Ref. 1; AAA39809 and 3; CAA83229." evidence="6" ref="1 3">
    <location>
        <begin position="694"/>
        <end position="717"/>
    </location>
</feature>
<feature type="sequence conflict" description="In Ref. 1; AAA39809, 3; CAA83229 and 6; ABK96805." evidence="6" ref="1 3 6">
    <original>V</original>
    <variation>M</variation>
    <location>
        <position position="817"/>
    </location>
</feature>
<feature type="sequence conflict" description="In Ref. 1; AAA39809, 3; CAA83229 and 6; ABK96805." evidence="6" ref="1 3 6">
    <original>KH</original>
    <variation>ND</variation>
    <location>
        <begin position="846"/>
        <end position="847"/>
    </location>
</feature>
<feature type="sequence conflict" description="In Ref. 2; AAA39813." evidence="6" ref="2">
    <original>KH</original>
    <variation>TV</variation>
    <location>
        <begin position="846"/>
        <end position="847"/>
    </location>
</feature>
<accession>P19246</accession>
<accession>A1E2H9</accession>
<accession>Q5SVF6</accession>
<accession>Q61959</accession>
<protein>
    <recommendedName>
        <fullName>Neurofilament heavy polypeptide</fullName>
        <shortName>NF-H</shortName>
    </recommendedName>
    <alternativeName>
        <fullName>200 kDa neurofilament protein</fullName>
    </alternativeName>
    <alternativeName>
        <fullName>Neurofilament triplet H protein</fullName>
    </alternativeName>
</protein>
<reference key="1">
    <citation type="journal article" date="1988" name="Brain Res.">
        <title>The structure of the largest murine neurofilament protein (NF-H) as revealed by cDNA and genomic sequences.</title>
        <authorList>
            <person name="Shneidman P.S."/>
            <person name="Carden M.J."/>
            <person name="Lees J.F."/>
            <person name="Lazzarini R.A."/>
        </authorList>
    </citation>
    <scope>NUCLEOTIDE SEQUENCE [MRNA]</scope>
    <source>
        <strain>Swiss Webster</strain>
        <tissue>Brain</tissue>
    </source>
</reference>
<reference key="2">
    <citation type="journal article" date="1988" name="Gene">
        <title>Sequence and structure of the mouse gene coding for the largest neurofilament subunit.</title>
        <authorList>
            <person name="Julien J.-P."/>
            <person name="Cote F."/>
            <person name="Beaudet L."/>
            <person name="Sidky M."/>
            <person name="Flavell D."/>
            <person name="Grosveld F."/>
            <person name="Mushynski W."/>
        </authorList>
    </citation>
    <scope>NUCLEOTIDE SEQUENCE [GENOMIC DNA]</scope>
</reference>
<reference key="3">
    <citation type="submission" date="1994-03" db="EMBL/GenBank/DDBJ databases">
        <authorList>
            <person name="Carden M.J."/>
        </authorList>
    </citation>
    <scope>NUCLEOTIDE SEQUENCE [GENOMIC DNA]</scope>
    <source>
        <strain>Swiss Webster</strain>
        <tissue>Brain</tissue>
    </source>
</reference>
<reference key="4">
    <citation type="journal article" date="2009" name="PLoS Biol.">
        <title>Lineage-specific biology revealed by a finished genome assembly of the mouse.</title>
        <authorList>
            <person name="Church D.M."/>
            <person name="Goodstadt L."/>
            <person name="Hillier L.W."/>
            <person name="Zody M.C."/>
            <person name="Goldstein S."/>
            <person name="She X."/>
            <person name="Bult C.J."/>
            <person name="Agarwala R."/>
            <person name="Cherry J.L."/>
            <person name="DiCuccio M."/>
            <person name="Hlavina W."/>
            <person name="Kapustin Y."/>
            <person name="Meric P."/>
            <person name="Maglott D."/>
            <person name="Birtle Z."/>
            <person name="Marques A.C."/>
            <person name="Graves T."/>
            <person name="Zhou S."/>
            <person name="Teague B."/>
            <person name="Potamousis K."/>
            <person name="Churas C."/>
            <person name="Place M."/>
            <person name="Herschleb J."/>
            <person name="Runnheim R."/>
            <person name="Forrest D."/>
            <person name="Amos-Landgraf J."/>
            <person name="Schwartz D.C."/>
            <person name="Cheng Z."/>
            <person name="Lindblad-Toh K."/>
            <person name="Eichler E.E."/>
            <person name="Ponting C.P."/>
        </authorList>
    </citation>
    <scope>NUCLEOTIDE SEQUENCE [LARGE SCALE GENOMIC DNA]</scope>
    <source>
        <strain>C57BL/6J</strain>
    </source>
</reference>
<reference key="5">
    <citation type="submission" date="2009-01" db="UniProtKB">
        <authorList>
            <person name="Lubec G."/>
            <person name="Klug S."/>
            <person name="Sunyer B."/>
            <person name="Chen W.-Q."/>
        </authorList>
    </citation>
    <scope>PROTEIN SEQUENCE OF 167-180; 351-370; 382-401 AND 903-917</scope>
    <scope>IDENTIFICATION BY MASS SPECTROMETRY</scope>
    <source>
        <strain>OF1</strain>
        <tissue>Hippocampus</tissue>
    </source>
</reference>
<reference key="6">
    <citation type="submission" date="2006-11" db="EMBL/GenBank/DDBJ databases">
        <title>Novel metastatic mouse tumor cells express multiple properties of macrophages.</title>
        <authorList>
            <person name="Huysentruyt L.C."/>
            <person name="Banerjee D."/>
            <person name="Seyfried T.N."/>
        </authorList>
    </citation>
    <scope>NUCLEOTIDE SEQUENCE [MRNA] OF 814-961</scope>
    <source>
        <strain>VM</strain>
    </source>
</reference>
<reference key="7">
    <citation type="journal article" date="2006" name="Mol. Cell. Proteomics">
        <title>Comprehensive identification of phosphorylation sites in postsynaptic density preparations.</title>
        <authorList>
            <person name="Trinidad J.C."/>
            <person name="Specht C.G."/>
            <person name="Thalhammer A."/>
            <person name="Schoepfer R."/>
            <person name="Burlingame A.L."/>
        </authorList>
    </citation>
    <scope>PHOSPHORYLATION [LARGE SCALE ANALYSIS] AT SER-416; SER-529; SER-535; SER-547; SER-559; SER-565; SER-571; SER-577; SER-589; SER-601; SER-607; SER-613; SER-619; SER-625; SER-631; SER-637; SER-655; SER-661; SER-667; SER-673; SER-679; SER-685; SER-697; SER-703; SER-709; SER-715; SER-727; SER-733; SER-739; SER-745; SER-751; SER-757; SER-763; SER-769; SER-783; SER-789; SER-815; SER-834; SER-867 AND SER-888</scope>
    <scope>IDENTIFICATION BY MASS SPECTROMETRY [LARGE SCALE ANALYSIS]</scope>
    <source>
        <tissue>Brain</tissue>
    </source>
</reference>
<reference key="8">
    <citation type="journal article" date="2010" name="Cell">
        <title>A tissue-specific atlas of mouse protein phosphorylation and expression.</title>
        <authorList>
            <person name="Huttlin E.L."/>
            <person name="Jedrychowski M.P."/>
            <person name="Elias J.E."/>
            <person name="Goswami T."/>
            <person name="Rad R."/>
            <person name="Beausoleil S.A."/>
            <person name="Villen J."/>
            <person name="Haas W."/>
            <person name="Sowa M.E."/>
            <person name="Gygi S.P."/>
        </authorList>
    </citation>
    <scope>PHOSPHORYLATION [LARGE SCALE ANALYSIS] AT SER-74; SER-122; SER-416; SER-419; SER-535; SER-541; SER-547; SER-553; SER-559; SER-565; SER-571; SER-583; SER-589; SER-595; SER-601; SER-607; SER-619; SER-631; SER-637; SER-643; SER-649; SER-655; SER-661; SER-667; SER-673; SER-679; SER-685; SER-691; SER-697; SER-703; SER-709; SER-727; SER-733; SER-739; SER-745; SER-751; SER-757; SER-763; SER-769; SER-795; SER-834 AND SER-859</scope>
    <scope>IDENTIFICATION BY MASS SPECTROMETRY [LARGE SCALE ANALYSIS]</scope>
    <source>
        <tissue>Brain</tissue>
    </source>
</reference>
<reference key="9">
    <citation type="journal article" date="2012" name="J. Neurosci.">
        <title>Peripherin is a subunit of peripheral nerve neurofilaments: implications for differential vulnerability of CNS and peripheral nervous system axons.</title>
        <authorList>
            <person name="Yuan A."/>
            <person name="Sasaki T."/>
            <person name="Kumar A."/>
            <person name="Peterhoff C.M."/>
            <person name="Rao M.V."/>
            <person name="Liem R.K."/>
            <person name="Julien J.P."/>
            <person name="Nixon R.A."/>
        </authorList>
    </citation>
    <scope>FUNCTION</scope>
    <scope>SUBCELLULAR LOCATION</scope>
    <scope>TISSUE SPECIFICITY</scope>
</reference>
<name>NFH_MOUSE</name>
<gene>
    <name type="primary">Nefh</name>
    <name type="synonym">Kiaa0845</name>
    <name type="synonym">Nfh</name>
</gene>
<sequence length="1090" mass="116994">MMSFGSADALLGAPFAPLHGGGSLHYSLSRKAGPGGTRSAAGSSSGFHSWARTSVSSVSASPSRFRGAASSTDSLDTLSNGPEGCVVAAVAARSEKEQLQALNDRFAGYIDKVRQLEAHNRSLEGEAAALRQQQAGRAAMGELYEREVREMRGAVLRLGAARGQLRLEQEHLLEDIAHVRQRLDEEARQREEAEAAARALARFAQEAEAARVELQKKAQALQEECGYLRRHHQEEVGELLGQIQGCGAAQAQAQAEARDALKCDVTSALREIRAQLEGHAVQSTLQSEEWFRVRLDRLSEAAKVNTDAMRSAQEEITEYRRQLQARTTELEALKSTKESLERQRSELEDRHQADIASYQDAIQQLDSELRNTKWEMAAQLREYQDLLNVKMALDIEIAAYRKLLEGEECRIGFGPSPFSLTEGLPKIPSISTHIKVKSEEMIKVVEKSEKETVIVEGQTEEIRVTEGVTEEEDKEAQGQEGEEAEEGEEKEEEEGAAATSPPAEEAASPEKETKSRVKEEAKSPGEAKSPGEAKSPAEAKSPGEAKSPGEAKSPGEAKSPAEPKSPAEPKSPAEAKSPAEPKSPATVKSPGEAKSPSEAKSPAEAKSPAEAKSPAEAKSPAEAKSPAEAKSPAEAKSPATVKSPGEAKSPSEAKSPAEAKSPAEAKSPAEAKSPAEVKSPGEAKSPAEPKSPAEAKSPAEVKSPAEAKSPAEVKSPGEAKSPAAVKSPAEAKSPAAVKSPGEAKSPGEAKSPAEAKSPAEAKSPIEVKSPEKAKTPVKEGAKSPAEAKSPEKAKSPVKEDIKPPAEAKSPEKAKSPVKEGAKPPEKAKPLDVKSPEAQTPVQEEAKHPTDIRPPEQVKSPAKEKAKSPEKEEAKTSEKVAPKKEEVKSPVKEEVKAKEPPKKVEEEKTLPTPKTEAKESKKDEAPKEAPKPKVEEKKETPTEKPKDSTAEAKKEEAGEKKKAVASEEETPAKLGVKEEAKPKEKTETTKTEAEDTKAKEPSKPTETEKPKKEEMPAAPEKKDTKEEKTTESRKPEEKPKMEAKVKEDDKSLSKEPSKPKTEKAEKSSSTDQKESQPPEKTTEDKATKGEK</sequence>
<proteinExistence type="evidence at protein level"/>